<reference key="1">
    <citation type="journal article" date="1998" name="DNA Res.">
        <title>Structural analysis of Arabidopsis thaliana chromosome 5. VI. Sequence features of the regions of 1,367,185 bp covered by 19 physically assigned P1 and TAC clones.</title>
        <authorList>
            <person name="Kotani H."/>
            <person name="Nakamura Y."/>
            <person name="Sato S."/>
            <person name="Asamizu E."/>
            <person name="Kaneko T."/>
            <person name="Miyajima N."/>
            <person name="Tabata S."/>
        </authorList>
    </citation>
    <scope>NUCLEOTIDE SEQUENCE [LARGE SCALE GENOMIC DNA]</scope>
    <source>
        <strain>cv. Columbia</strain>
    </source>
</reference>
<reference key="2">
    <citation type="journal article" date="2017" name="Plant J.">
        <title>Araport11: a complete reannotation of the Arabidopsis thaliana reference genome.</title>
        <authorList>
            <person name="Cheng C.Y."/>
            <person name="Krishnakumar V."/>
            <person name="Chan A.P."/>
            <person name="Thibaud-Nissen F."/>
            <person name="Schobel S."/>
            <person name="Town C.D."/>
        </authorList>
    </citation>
    <scope>GENOME REANNOTATION</scope>
    <source>
        <strain>cv. Columbia</strain>
    </source>
</reference>
<reference key="3">
    <citation type="journal article" date="2003" name="Science">
        <title>Empirical analysis of transcriptional activity in the Arabidopsis genome.</title>
        <authorList>
            <person name="Yamada K."/>
            <person name="Lim J."/>
            <person name="Dale J.M."/>
            <person name="Chen H."/>
            <person name="Shinn P."/>
            <person name="Palm C.J."/>
            <person name="Southwick A.M."/>
            <person name="Wu H.C."/>
            <person name="Kim C.J."/>
            <person name="Nguyen M."/>
            <person name="Pham P.K."/>
            <person name="Cheuk R.F."/>
            <person name="Karlin-Newmann G."/>
            <person name="Liu S.X."/>
            <person name="Lam B."/>
            <person name="Sakano H."/>
            <person name="Wu T."/>
            <person name="Yu G."/>
            <person name="Miranda M."/>
            <person name="Quach H.L."/>
            <person name="Tripp M."/>
            <person name="Chang C.H."/>
            <person name="Lee J.M."/>
            <person name="Toriumi M.J."/>
            <person name="Chan M.M."/>
            <person name="Tang C.C."/>
            <person name="Onodera C.S."/>
            <person name="Deng J.M."/>
            <person name="Akiyama K."/>
            <person name="Ansari Y."/>
            <person name="Arakawa T."/>
            <person name="Banh J."/>
            <person name="Banno F."/>
            <person name="Bowser L."/>
            <person name="Brooks S.Y."/>
            <person name="Carninci P."/>
            <person name="Chao Q."/>
            <person name="Choy N."/>
            <person name="Enju A."/>
            <person name="Goldsmith A.D."/>
            <person name="Gurjal M."/>
            <person name="Hansen N.F."/>
            <person name="Hayashizaki Y."/>
            <person name="Johnson-Hopson C."/>
            <person name="Hsuan V.W."/>
            <person name="Iida K."/>
            <person name="Karnes M."/>
            <person name="Khan S."/>
            <person name="Koesema E."/>
            <person name="Ishida J."/>
            <person name="Jiang P.X."/>
            <person name="Jones T."/>
            <person name="Kawai J."/>
            <person name="Kamiya A."/>
            <person name="Meyers C."/>
            <person name="Nakajima M."/>
            <person name="Narusaka M."/>
            <person name="Seki M."/>
            <person name="Sakurai T."/>
            <person name="Satou M."/>
            <person name="Tamse R."/>
            <person name="Vaysberg M."/>
            <person name="Wallender E.K."/>
            <person name="Wong C."/>
            <person name="Yamamura Y."/>
            <person name="Yuan S."/>
            <person name="Shinozaki K."/>
            <person name="Davis R.W."/>
            <person name="Theologis A."/>
            <person name="Ecker J.R."/>
        </authorList>
    </citation>
    <scope>NUCLEOTIDE SEQUENCE [LARGE SCALE MRNA]</scope>
    <source>
        <strain>cv. Columbia</strain>
    </source>
</reference>
<reference key="4">
    <citation type="submission" date="2002-03" db="EMBL/GenBank/DDBJ databases">
        <title>Full-length cDNA from Arabidopsis thaliana.</title>
        <authorList>
            <person name="Brover V.V."/>
            <person name="Troukhan M.E."/>
            <person name="Alexandrov N.A."/>
            <person name="Lu Y.-P."/>
            <person name="Flavell R.B."/>
            <person name="Feldmann K.A."/>
        </authorList>
    </citation>
    <scope>NUCLEOTIDE SEQUENCE [LARGE SCALE MRNA]</scope>
</reference>
<reference key="5">
    <citation type="journal article" date="2003" name="Plant Physiol.">
        <title>Analysis of the small GTPase gene superfamily of Arabidopsis.</title>
        <authorList>
            <person name="Vernoud V."/>
            <person name="Horton A.C."/>
            <person name="Yang Z."/>
            <person name="Nielsen E."/>
        </authorList>
    </citation>
    <scope>GENE FAMILY</scope>
    <scope>NOMENCLATURE</scope>
</reference>
<reference key="6">
    <citation type="journal article" date="2010" name="Proc. Natl. Acad. Sci. U.S.A.">
        <title>Translationally controlled tumor protein is a conserved mitotic growth integrator in animals and plants.</title>
        <authorList>
            <person name="Brioudes F."/>
            <person name="Thierry A.M."/>
            <person name="Chambrier P."/>
            <person name="Mollereau B."/>
            <person name="Bendahmane M."/>
        </authorList>
    </citation>
    <scope>INTERACTION WITH TCTP1</scope>
</reference>
<reference key="7">
    <citation type="journal article" date="2012" name="Mol. Cell. Proteomics">
        <title>Comparative large-scale characterisation of plant vs. mammal proteins reveals similar and idiosyncratic N-alpha acetylation features.</title>
        <authorList>
            <person name="Bienvenut W.V."/>
            <person name="Sumpton D."/>
            <person name="Martinez A."/>
            <person name="Lilla S."/>
            <person name="Espagne C."/>
            <person name="Meinnel T."/>
            <person name="Giglione C."/>
        </authorList>
    </citation>
    <scope>ACETYLATION [LARGE SCALE ANALYSIS] AT THR-2</scope>
    <scope>CLEAVAGE OF INITIATOR METHIONINE [LARGE SCALE ANALYSIS]</scope>
    <scope>IDENTIFICATION BY MASS SPECTROMETRY [LARGE SCALE ANALYSIS]</scope>
</reference>
<comment type="function">
    <text evidence="1">Intracellular vesicle trafficking and protein transport.</text>
</comment>
<comment type="subunit">
    <text evidence="3">Interacts with TCTP1.</text>
</comment>
<comment type="subcellular location">
    <subcellularLocation>
        <location evidence="5">Cell membrane</location>
        <topology evidence="5">Lipid-anchor</topology>
        <orientation evidence="5">Cytoplasmic side</orientation>
    </subcellularLocation>
</comment>
<comment type="similarity">
    <text evidence="5">Belongs to the small GTPase superfamily. Rab family.</text>
</comment>
<keyword id="KW-0007">Acetylation</keyword>
<keyword id="KW-1003">Cell membrane</keyword>
<keyword id="KW-0342">GTP-binding</keyword>
<keyword id="KW-0449">Lipoprotein</keyword>
<keyword id="KW-0472">Membrane</keyword>
<keyword id="KW-0547">Nucleotide-binding</keyword>
<keyword id="KW-0636">Prenylation</keyword>
<keyword id="KW-0653">Protein transport</keyword>
<keyword id="KW-1185">Reference proteome</keyword>
<keyword id="KW-0813">Transport</keyword>
<gene>
    <name evidence="4" type="primary">RABA4A</name>
    <name evidence="6" type="ordered locus">At5g65270</name>
    <name evidence="7" type="ORF">MQN23.22</name>
</gene>
<organism>
    <name type="scientific">Arabidopsis thaliana</name>
    <name type="common">Mouse-ear cress</name>
    <dbReference type="NCBI Taxonomy" id="3702"/>
    <lineage>
        <taxon>Eukaryota</taxon>
        <taxon>Viridiplantae</taxon>
        <taxon>Streptophyta</taxon>
        <taxon>Embryophyta</taxon>
        <taxon>Tracheophyta</taxon>
        <taxon>Spermatophyta</taxon>
        <taxon>Magnoliopsida</taxon>
        <taxon>eudicotyledons</taxon>
        <taxon>Gunneridae</taxon>
        <taxon>Pentapetalae</taxon>
        <taxon>rosids</taxon>
        <taxon>malvids</taxon>
        <taxon>Brassicales</taxon>
        <taxon>Brassicaceae</taxon>
        <taxon>Camelineae</taxon>
        <taxon>Arabidopsis</taxon>
    </lineage>
</organism>
<feature type="initiator methionine" description="Removed" evidence="8">
    <location>
        <position position="1"/>
    </location>
</feature>
<feature type="chain" id="PRO_0000407344" description="Ras-related protein RABA4a">
    <location>
        <begin position="2"/>
        <end position="226"/>
    </location>
</feature>
<feature type="region of interest" description="Disordered" evidence="2">
    <location>
        <begin position="189"/>
        <end position="226"/>
    </location>
</feature>
<feature type="short sequence motif" description="Effector region" evidence="1">
    <location>
        <begin position="46"/>
        <end position="54"/>
    </location>
</feature>
<feature type="compositionally biased region" description="Polar residues" evidence="2">
    <location>
        <begin position="217"/>
        <end position="226"/>
    </location>
</feature>
<feature type="binding site" evidence="1">
    <location>
        <begin position="24"/>
        <end position="31"/>
    </location>
    <ligand>
        <name>GTP</name>
        <dbReference type="ChEBI" id="CHEBI:37565"/>
    </ligand>
</feature>
<feature type="binding site" evidence="1">
    <location>
        <begin position="72"/>
        <end position="76"/>
    </location>
    <ligand>
        <name>GTP</name>
        <dbReference type="ChEBI" id="CHEBI:37565"/>
    </ligand>
</feature>
<feature type="binding site" evidence="1">
    <location>
        <begin position="130"/>
        <end position="133"/>
    </location>
    <ligand>
        <name>GTP</name>
        <dbReference type="ChEBI" id="CHEBI:37565"/>
    </ligand>
</feature>
<feature type="binding site" evidence="1">
    <location>
        <begin position="160"/>
        <end position="161"/>
    </location>
    <ligand>
        <name>GTP</name>
        <dbReference type="ChEBI" id="CHEBI:37565"/>
    </ligand>
</feature>
<feature type="modified residue" description="N-acetylthreonine" evidence="8">
    <location>
        <position position="2"/>
    </location>
</feature>
<feature type="lipid moiety-binding region" description="S-geranylgeranyl cysteine" evidence="1">
    <location>
        <position position="223"/>
    </location>
</feature>
<feature type="lipid moiety-binding region" description="S-geranylgeranyl cysteine" evidence="1">
    <location>
        <position position="224"/>
    </location>
</feature>
<evidence type="ECO:0000250" key="1"/>
<evidence type="ECO:0000256" key="2">
    <source>
        <dbReference type="SAM" id="MobiDB-lite"/>
    </source>
</evidence>
<evidence type="ECO:0000269" key="3">
    <source>
    </source>
</evidence>
<evidence type="ECO:0000303" key="4">
    <source>
    </source>
</evidence>
<evidence type="ECO:0000305" key="5"/>
<evidence type="ECO:0000312" key="6">
    <source>
        <dbReference type="Araport" id="AT5G65270"/>
    </source>
</evidence>
<evidence type="ECO:0000312" key="7">
    <source>
        <dbReference type="EMBL" id="BAB11663.1"/>
    </source>
</evidence>
<evidence type="ECO:0007744" key="8">
    <source>
    </source>
</evidence>
<protein>
    <recommendedName>
        <fullName evidence="4">Ras-related protein RABA4a</fullName>
        <shortName evidence="4">AtRABA4a</shortName>
    </recommendedName>
</protein>
<sequence length="226" mass="24842">MTSGGGYGDPSQKIDYVFKVVLIGDSAVGKSQILARYARDEFSLDSKATIGVEFQTRTLVIDHKSVKAQIWDTAGQERYRAVTSAYYRGAVGAMLVYDITRRQTFDHIPRWLEELRAHADKNIVIILIGNKSDLVDQRAIPTEDAKEFAEKEGLFFLETSAFNATNVESAFSTVLTEIFNIVNKKSLAASEDQENGNPGSLAGKKIDIVPGPGQVIPNKSNMCCNS</sequence>
<proteinExistence type="evidence at protein level"/>
<dbReference type="EMBL" id="AB013395">
    <property type="protein sequence ID" value="BAB11663.1"/>
    <property type="molecule type" value="Genomic_DNA"/>
</dbReference>
<dbReference type="EMBL" id="CP002688">
    <property type="protein sequence ID" value="AED98031.1"/>
    <property type="molecule type" value="Genomic_DNA"/>
</dbReference>
<dbReference type="EMBL" id="AY045947">
    <property type="protein sequence ID" value="AAK76621.1"/>
    <property type="molecule type" value="mRNA"/>
</dbReference>
<dbReference type="EMBL" id="AY079309">
    <property type="protein sequence ID" value="AAL85040.1"/>
    <property type="molecule type" value="mRNA"/>
</dbReference>
<dbReference type="EMBL" id="AY087004">
    <property type="protein sequence ID" value="AAM64565.1"/>
    <property type="molecule type" value="mRNA"/>
</dbReference>
<dbReference type="RefSeq" id="NP_201330.1">
    <property type="nucleotide sequence ID" value="NM_125925.4"/>
</dbReference>
<dbReference type="SMR" id="Q9FJN8"/>
<dbReference type="BioGRID" id="21894">
    <property type="interactions" value="1"/>
</dbReference>
<dbReference type="FunCoup" id="Q9FJN8">
    <property type="interactions" value="721"/>
</dbReference>
<dbReference type="STRING" id="3702.Q9FJN8"/>
<dbReference type="GlyGen" id="Q9FJN8">
    <property type="glycosylation" value="1 site"/>
</dbReference>
<dbReference type="iPTMnet" id="Q9FJN8"/>
<dbReference type="PaxDb" id="3702-AT5G65270.1"/>
<dbReference type="ProteomicsDB" id="225902"/>
<dbReference type="EnsemblPlants" id="AT5G65270.1">
    <property type="protein sequence ID" value="AT5G65270.1"/>
    <property type="gene ID" value="AT5G65270"/>
</dbReference>
<dbReference type="GeneID" id="836652"/>
<dbReference type="Gramene" id="AT5G65270.1">
    <property type="protein sequence ID" value="AT5G65270.1"/>
    <property type="gene ID" value="AT5G65270"/>
</dbReference>
<dbReference type="KEGG" id="ath:AT5G65270"/>
<dbReference type="Araport" id="AT5G65270"/>
<dbReference type="TAIR" id="AT5G65270">
    <property type="gene designation" value="RABA4A"/>
</dbReference>
<dbReference type="eggNOG" id="KOG0087">
    <property type="taxonomic scope" value="Eukaryota"/>
</dbReference>
<dbReference type="HOGENOM" id="CLU_041217_23_0_1"/>
<dbReference type="InParanoid" id="Q9FJN8"/>
<dbReference type="OMA" id="KRACCIN"/>
<dbReference type="OrthoDB" id="9989112at2759"/>
<dbReference type="PhylomeDB" id="Q9FJN8"/>
<dbReference type="PRO" id="PR:Q9FJN8"/>
<dbReference type="Proteomes" id="UP000006548">
    <property type="component" value="Chromosome 5"/>
</dbReference>
<dbReference type="ExpressionAtlas" id="Q9FJN8">
    <property type="expression patterns" value="baseline and differential"/>
</dbReference>
<dbReference type="GO" id="GO:0005886">
    <property type="term" value="C:plasma membrane"/>
    <property type="evidence" value="ECO:0007005"/>
    <property type="project" value="TAIR"/>
</dbReference>
<dbReference type="GO" id="GO:0009536">
    <property type="term" value="C:plastid"/>
    <property type="evidence" value="ECO:0007005"/>
    <property type="project" value="TAIR"/>
</dbReference>
<dbReference type="GO" id="GO:0005525">
    <property type="term" value="F:GTP binding"/>
    <property type="evidence" value="ECO:0007669"/>
    <property type="project" value="UniProtKB-KW"/>
</dbReference>
<dbReference type="GO" id="GO:0003924">
    <property type="term" value="F:GTPase activity"/>
    <property type="evidence" value="ECO:0007669"/>
    <property type="project" value="InterPro"/>
</dbReference>
<dbReference type="GO" id="GO:0042546">
    <property type="term" value="P:cell wall biogenesis"/>
    <property type="evidence" value="ECO:0000315"/>
    <property type="project" value="TAIR"/>
</dbReference>
<dbReference type="GO" id="GO:0015031">
    <property type="term" value="P:protein transport"/>
    <property type="evidence" value="ECO:0007669"/>
    <property type="project" value="UniProtKB-KW"/>
</dbReference>
<dbReference type="CDD" id="cd01868">
    <property type="entry name" value="Rab11_like"/>
    <property type="match status" value="1"/>
</dbReference>
<dbReference type="FunFam" id="3.40.50.300:FF:000274">
    <property type="entry name" value="ras-related protein RABA5a"/>
    <property type="match status" value="1"/>
</dbReference>
<dbReference type="Gene3D" id="3.40.50.300">
    <property type="entry name" value="P-loop containing nucleotide triphosphate hydrolases"/>
    <property type="match status" value="1"/>
</dbReference>
<dbReference type="InterPro" id="IPR027417">
    <property type="entry name" value="P-loop_NTPase"/>
</dbReference>
<dbReference type="InterPro" id="IPR050209">
    <property type="entry name" value="Rab_GTPases_membrane_traffic"/>
</dbReference>
<dbReference type="InterPro" id="IPR005225">
    <property type="entry name" value="Small_GTP-bd"/>
</dbReference>
<dbReference type="InterPro" id="IPR001806">
    <property type="entry name" value="Small_GTPase"/>
</dbReference>
<dbReference type="NCBIfam" id="TIGR00231">
    <property type="entry name" value="small_GTP"/>
    <property type="match status" value="1"/>
</dbReference>
<dbReference type="PANTHER" id="PTHR47979">
    <property type="entry name" value="DRAB11-RELATED"/>
    <property type="match status" value="1"/>
</dbReference>
<dbReference type="Pfam" id="PF00071">
    <property type="entry name" value="Ras"/>
    <property type="match status" value="1"/>
</dbReference>
<dbReference type="PRINTS" id="PR00449">
    <property type="entry name" value="RASTRNSFRMNG"/>
</dbReference>
<dbReference type="SMART" id="SM00177">
    <property type="entry name" value="ARF"/>
    <property type="match status" value="1"/>
</dbReference>
<dbReference type="SMART" id="SM00175">
    <property type="entry name" value="RAB"/>
    <property type="match status" value="1"/>
</dbReference>
<dbReference type="SMART" id="SM00176">
    <property type="entry name" value="RAN"/>
    <property type="match status" value="1"/>
</dbReference>
<dbReference type="SMART" id="SM00173">
    <property type="entry name" value="RAS"/>
    <property type="match status" value="1"/>
</dbReference>
<dbReference type="SMART" id="SM00174">
    <property type="entry name" value="RHO"/>
    <property type="match status" value="1"/>
</dbReference>
<dbReference type="SUPFAM" id="SSF52540">
    <property type="entry name" value="P-loop containing nucleoside triphosphate hydrolases"/>
    <property type="match status" value="1"/>
</dbReference>
<dbReference type="PROSITE" id="PS51419">
    <property type="entry name" value="RAB"/>
    <property type="match status" value="1"/>
</dbReference>
<accession>Q9FJN8</accession>
<name>RAA4A_ARATH</name>